<reference key="1">
    <citation type="journal article" date="2006" name="Nature">
        <title>The finished DNA sequence of human chromosome 12.</title>
        <authorList>
            <person name="Scherer S.E."/>
            <person name="Muzny D.M."/>
            <person name="Buhay C.J."/>
            <person name="Chen R."/>
            <person name="Cree A."/>
            <person name="Ding Y."/>
            <person name="Dugan-Rocha S."/>
            <person name="Gill R."/>
            <person name="Gunaratne P."/>
            <person name="Harris R.A."/>
            <person name="Hawes A.C."/>
            <person name="Hernandez J."/>
            <person name="Hodgson A.V."/>
            <person name="Hume J."/>
            <person name="Jackson A."/>
            <person name="Khan Z.M."/>
            <person name="Kovar-Smith C."/>
            <person name="Lewis L.R."/>
            <person name="Lozado R.J."/>
            <person name="Metzker M.L."/>
            <person name="Milosavljevic A."/>
            <person name="Miner G.R."/>
            <person name="Montgomery K.T."/>
            <person name="Morgan M.B."/>
            <person name="Nazareth L.V."/>
            <person name="Scott G."/>
            <person name="Sodergren E."/>
            <person name="Song X.-Z."/>
            <person name="Steffen D."/>
            <person name="Lovering R.C."/>
            <person name="Wheeler D.A."/>
            <person name="Worley K.C."/>
            <person name="Yuan Y."/>
            <person name="Zhang Z."/>
            <person name="Adams C.Q."/>
            <person name="Ansari-Lari M.A."/>
            <person name="Ayele M."/>
            <person name="Brown M.J."/>
            <person name="Chen G."/>
            <person name="Chen Z."/>
            <person name="Clerc-Blankenburg K.P."/>
            <person name="Davis C."/>
            <person name="Delgado O."/>
            <person name="Dinh H.H."/>
            <person name="Draper H."/>
            <person name="Gonzalez-Garay M.L."/>
            <person name="Havlak P."/>
            <person name="Jackson L.R."/>
            <person name="Jacob L.S."/>
            <person name="Kelly S.H."/>
            <person name="Li L."/>
            <person name="Li Z."/>
            <person name="Liu J."/>
            <person name="Liu W."/>
            <person name="Lu J."/>
            <person name="Maheshwari M."/>
            <person name="Nguyen B.-V."/>
            <person name="Okwuonu G.O."/>
            <person name="Pasternak S."/>
            <person name="Perez L.M."/>
            <person name="Plopper F.J.H."/>
            <person name="Santibanez J."/>
            <person name="Shen H."/>
            <person name="Tabor P.E."/>
            <person name="Verduzco D."/>
            <person name="Waldron L."/>
            <person name="Wang Q."/>
            <person name="Williams G.A."/>
            <person name="Zhang J."/>
            <person name="Zhou J."/>
            <person name="Allen C.C."/>
            <person name="Amin A.G."/>
            <person name="Anyalebechi V."/>
            <person name="Bailey M."/>
            <person name="Barbaria J.A."/>
            <person name="Bimage K.E."/>
            <person name="Bryant N.P."/>
            <person name="Burch P.E."/>
            <person name="Burkett C.E."/>
            <person name="Burrell K.L."/>
            <person name="Calderon E."/>
            <person name="Cardenas V."/>
            <person name="Carter K."/>
            <person name="Casias K."/>
            <person name="Cavazos I."/>
            <person name="Cavazos S.R."/>
            <person name="Ceasar H."/>
            <person name="Chacko J."/>
            <person name="Chan S.N."/>
            <person name="Chavez D."/>
            <person name="Christopoulos C."/>
            <person name="Chu J."/>
            <person name="Cockrell R."/>
            <person name="Cox C.D."/>
            <person name="Dang M."/>
            <person name="Dathorne S.R."/>
            <person name="David R."/>
            <person name="Davis C.M."/>
            <person name="Davy-Carroll L."/>
            <person name="Deshazo D.R."/>
            <person name="Donlin J.E."/>
            <person name="D'Souza L."/>
            <person name="Eaves K.A."/>
            <person name="Egan A."/>
            <person name="Emery-Cohen A.J."/>
            <person name="Escotto M."/>
            <person name="Flagg N."/>
            <person name="Forbes L.D."/>
            <person name="Gabisi A.M."/>
            <person name="Garza M."/>
            <person name="Hamilton C."/>
            <person name="Henderson N."/>
            <person name="Hernandez O."/>
            <person name="Hines S."/>
            <person name="Hogues M.E."/>
            <person name="Huang M."/>
            <person name="Idlebird D.G."/>
            <person name="Johnson R."/>
            <person name="Jolivet A."/>
            <person name="Jones S."/>
            <person name="Kagan R."/>
            <person name="King L.M."/>
            <person name="Leal B."/>
            <person name="Lebow H."/>
            <person name="Lee S."/>
            <person name="LeVan J.M."/>
            <person name="Lewis L.C."/>
            <person name="London P."/>
            <person name="Lorensuhewa L.M."/>
            <person name="Loulseged H."/>
            <person name="Lovett D.A."/>
            <person name="Lucier A."/>
            <person name="Lucier R.L."/>
            <person name="Ma J."/>
            <person name="Madu R.C."/>
            <person name="Mapua P."/>
            <person name="Martindale A.D."/>
            <person name="Martinez E."/>
            <person name="Massey E."/>
            <person name="Mawhiney S."/>
            <person name="Meador M.G."/>
            <person name="Mendez S."/>
            <person name="Mercado C."/>
            <person name="Mercado I.C."/>
            <person name="Merritt C.E."/>
            <person name="Miner Z.L."/>
            <person name="Minja E."/>
            <person name="Mitchell T."/>
            <person name="Mohabbat F."/>
            <person name="Mohabbat K."/>
            <person name="Montgomery B."/>
            <person name="Moore N."/>
            <person name="Morris S."/>
            <person name="Munidasa M."/>
            <person name="Ngo R.N."/>
            <person name="Nguyen N.B."/>
            <person name="Nickerson E."/>
            <person name="Nwaokelemeh O.O."/>
            <person name="Nwokenkwo S."/>
            <person name="Obregon M."/>
            <person name="Oguh M."/>
            <person name="Oragunye N."/>
            <person name="Oviedo R.J."/>
            <person name="Parish B.J."/>
            <person name="Parker D.N."/>
            <person name="Parrish J."/>
            <person name="Parks K.L."/>
            <person name="Paul H.A."/>
            <person name="Payton B.A."/>
            <person name="Perez A."/>
            <person name="Perrin W."/>
            <person name="Pickens A."/>
            <person name="Primus E.L."/>
            <person name="Pu L.-L."/>
            <person name="Puazo M."/>
            <person name="Quiles M.M."/>
            <person name="Quiroz J.B."/>
            <person name="Rabata D."/>
            <person name="Reeves K."/>
            <person name="Ruiz S.J."/>
            <person name="Shao H."/>
            <person name="Sisson I."/>
            <person name="Sonaike T."/>
            <person name="Sorelle R.P."/>
            <person name="Sutton A.E."/>
            <person name="Svatek A.F."/>
            <person name="Svetz L.A."/>
            <person name="Tamerisa K.S."/>
            <person name="Taylor T.R."/>
            <person name="Teague B."/>
            <person name="Thomas N."/>
            <person name="Thorn R.D."/>
            <person name="Trejos Z.Y."/>
            <person name="Trevino B.K."/>
            <person name="Ukegbu O.N."/>
            <person name="Urban J.B."/>
            <person name="Vasquez L.I."/>
            <person name="Vera V.A."/>
            <person name="Villasana D.M."/>
            <person name="Wang L."/>
            <person name="Ward-Moore S."/>
            <person name="Warren J.T."/>
            <person name="Wei X."/>
            <person name="White F."/>
            <person name="Williamson A.L."/>
            <person name="Wleczyk R."/>
            <person name="Wooden H.S."/>
            <person name="Wooden S.H."/>
            <person name="Yen J."/>
            <person name="Yoon L."/>
            <person name="Yoon V."/>
            <person name="Zorrilla S.E."/>
            <person name="Nelson D."/>
            <person name="Kucherlapati R."/>
            <person name="Weinstock G."/>
            <person name="Gibbs R.A."/>
        </authorList>
    </citation>
    <scope>NUCLEOTIDE SEQUENCE [LARGE SCALE GENOMIC DNA]</scope>
</reference>
<reference key="2">
    <citation type="journal article" date="2003" name="J. Virol.">
        <title>Survey of human genes of retroviral origin: identification and transcriptome of the genes with coding capacity for complete envelope proteins.</title>
        <authorList>
            <person name="de Parseval N."/>
            <person name="Lazar V."/>
            <person name="Casella J.-F."/>
            <person name="Benit L."/>
            <person name="Heidmann T."/>
        </authorList>
    </citation>
    <scope>CHARACTERIZATION</scope>
</reference>
<reference key="3">
    <citation type="journal article" date="2003" name="Proc. Natl. Acad. Sci. U.S.A.">
        <title>Genomewide screening for fusogenic human endogenous retrovirus envelopes identifies syncytin 2, a gene conserved on primate evolution.</title>
        <authorList>
            <person name="Blaise S."/>
            <person name="de Parseval N."/>
            <person name="Benit L."/>
            <person name="Heidmann T."/>
        </authorList>
    </citation>
    <scope>FUNCTION</scope>
</reference>
<reference key="4">
    <citation type="journal article" date="2003" name="Oncogene">
        <title>Quantitation of HERV-K env gene expression and splicing in human breast cancer.</title>
        <authorList>
            <person name="Wang-Johanning F."/>
            <person name="Frost A.R."/>
            <person name="Jian B."/>
            <person name="Epp L."/>
            <person name="Lu D.W."/>
            <person name="Johanning G.L."/>
        </authorList>
    </citation>
    <scope>SUBGENOMIC RNA</scope>
</reference>
<keyword id="KW-1003">Cell membrane</keyword>
<keyword id="KW-0165">Cleavage on pair of basic residues</keyword>
<keyword id="KW-1015">Disulfide bond</keyword>
<keyword id="KW-0895">ERV</keyword>
<keyword id="KW-0325">Glycoprotein</keyword>
<keyword id="KW-0472">Membrane</keyword>
<keyword id="KW-1185">Reference proteome</keyword>
<keyword id="KW-0732">Signal</keyword>
<keyword id="KW-0812">Transmembrane</keyword>
<keyword id="KW-1133">Transmembrane helix</keyword>
<keyword id="KW-0814">Transposable element</keyword>
<keyword id="KW-0261">Viral envelope protein</keyword>
<keyword id="KW-0946">Virion</keyword>
<feature type="signal peptide" evidence="2">
    <location>
        <begin position="1"/>
        <end position="88"/>
    </location>
</feature>
<feature type="chain" id="PRO_0000008497" description="Endogenous retrovirus group K member 21 Env polyprotein">
    <location>
        <begin position="89"/>
        <end position="698"/>
    </location>
</feature>
<feature type="chain" id="PRO_0000008498" description="Surface protein" evidence="1">
    <location>
        <begin position="89"/>
        <end position="464"/>
    </location>
</feature>
<feature type="chain" id="PRO_0000008499" description="Transmembrane protein" evidence="1">
    <location>
        <begin position="465"/>
        <end position="698"/>
    </location>
</feature>
<feature type="topological domain" description="Extracellular" evidence="2">
    <location>
        <begin position="89"/>
        <end position="631"/>
    </location>
</feature>
<feature type="transmembrane region" description="Helical" evidence="2">
    <location>
        <begin position="632"/>
        <end position="652"/>
    </location>
</feature>
<feature type="topological domain" description="Cytoplasmic" evidence="2">
    <location>
        <begin position="653"/>
        <end position="698"/>
    </location>
</feature>
<feature type="region of interest" description="Disordered" evidence="3">
    <location>
        <begin position="1"/>
        <end position="25"/>
    </location>
</feature>
<feature type="region of interest" description="Fusion peptide" evidence="2">
    <location>
        <begin position="465"/>
        <end position="485"/>
    </location>
</feature>
<feature type="compositionally biased region" description="Basic residues" evidence="3">
    <location>
        <begin position="10"/>
        <end position="20"/>
    </location>
</feature>
<feature type="site" description="Cleavage" evidence="1">
    <location>
        <begin position="464"/>
        <end position="465"/>
    </location>
</feature>
<feature type="glycosylation site" description="N-linked (GlcNAc...) asparagine" evidence="2">
    <location>
        <position position="99"/>
    </location>
</feature>
<feature type="glycosylation site" description="N-linked (GlcNAc...) asparagine" evidence="2">
    <location>
        <position position="127"/>
    </location>
</feature>
<feature type="glycosylation site" description="N-linked (GlcNAc...) asparagine" evidence="2">
    <location>
        <position position="152"/>
    </location>
</feature>
<feature type="glycosylation site" description="N-linked (GlcNAc...) asparagine" evidence="2">
    <location>
        <position position="273"/>
    </location>
</feature>
<feature type="glycosylation site" description="N-linked (GlcNAc...) asparagine" evidence="2">
    <location>
        <position position="354"/>
    </location>
</feature>
<feature type="glycosylation site" description="N-linked (GlcNAc...) asparagine" evidence="2">
    <location>
        <position position="371"/>
    </location>
</feature>
<feature type="glycosylation site" description="N-linked (GlcNAc...) asparagine" evidence="2">
    <location>
        <position position="460"/>
    </location>
</feature>
<feature type="glycosylation site" description="N-linked (GlcNAc...) asparagine" evidence="2">
    <location>
        <position position="506"/>
    </location>
</feature>
<feature type="glycosylation site" description="N-linked (GlcNAc...) asparagine" evidence="2">
    <location>
        <position position="553"/>
    </location>
</feature>
<feature type="glycosylation site" description="N-linked (GlcNAc...) asparagine" evidence="2">
    <location>
        <position position="565"/>
    </location>
</feature>
<feature type="glycosylation site" description="N-linked (GlcNAc...) asparagine" evidence="2">
    <location>
        <position position="584"/>
    </location>
</feature>
<protein>
    <recommendedName>
        <fullName>Endogenous retrovirus group K member 21 Env polyprotein</fullName>
    </recommendedName>
    <alternativeName>
        <fullName>EnvK1 protein</fullName>
    </alternativeName>
    <alternativeName>
        <fullName>Envelope polyprotein</fullName>
    </alternativeName>
    <alternativeName>
        <fullName>HERV-K_12q14.1 provirus ancestral Env polyprotein</fullName>
    </alternativeName>
    <component>
        <recommendedName>
            <fullName>Surface protein</fullName>
            <shortName>SU</shortName>
        </recommendedName>
    </component>
    <component>
        <recommendedName>
            <fullName>Transmembrane protein</fullName>
            <shortName>TM</shortName>
        </recommendedName>
    </component>
</protein>
<accession>P61565</accession>
<dbReference type="EMBL" id="AC025420">
    <property type="status" value="NOT_ANNOTATED_CDS"/>
    <property type="molecule type" value="Genomic_DNA"/>
</dbReference>
<dbReference type="IntAct" id="P61565">
    <property type="interactions" value="1"/>
</dbReference>
<dbReference type="GlyCosmos" id="P61565">
    <property type="glycosylation" value="11 sites, No reported glycans"/>
</dbReference>
<dbReference type="GlyGen" id="P61565">
    <property type="glycosylation" value="13 sites, 1 O-linked glycan (1 site)"/>
</dbReference>
<dbReference type="iPTMnet" id="P61565"/>
<dbReference type="PhosphoSitePlus" id="P61565"/>
<dbReference type="BioMuta" id="HGNC:39035"/>
<dbReference type="jPOST" id="P61565"/>
<dbReference type="MassIVE" id="P61565"/>
<dbReference type="PeptideAtlas" id="P61565"/>
<dbReference type="GeneCards" id="ERVK-21"/>
<dbReference type="HGNC" id="HGNC:39035">
    <property type="gene designation" value="ERVK-21"/>
</dbReference>
<dbReference type="neXtProt" id="NX_P61565"/>
<dbReference type="InParanoid" id="P61565"/>
<dbReference type="PAN-GO" id="P61565">
    <property type="GO annotations" value="0 GO annotations based on evolutionary models"/>
</dbReference>
<dbReference type="PhylomeDB" id="P61565"/>
<dbReference type="Pharos" id="P61565">
    <property type="development level" value="Tdark"/>
</dbReference>
<dbReference type="Proteomes" id="UP000005640">
    <property type="component" value="Unplaced"/>
</dbReference>
<dbReference type="RNAct" id="P61565">
    <property type="molecule type" value="protein"/>
</dbReference>
<dbReference type="GO" id="GO:0005886">
    <property type="term" value="C:plasma membrane"/>
    <property type="evidence" value="ECO:0007669"/>
    <property type="project" value="UniProtKB-SubCell"/>
</dbReference>
<dbReference type="GO" id="GO:0005198">
    <property type="term" value="F:structural molecule activity"/>
    <property type="evidence" value="ECO:0007669"/>
    <property type="project" value="InterPro"/>
</dbReference>
<dbReference type="CDD" id="cd09909">
    <property type="entry name" value="HIV-1-like_HR1-HR2"/>
    <property type="match status" value="1"/>
</dbReference>
<dbReference type="InterPro" id="IPR000328">
    <property type="entry name" value="GP41-like"/>
</dbReference>
<dbReference type="InterPro" id="IPR029104">
    <property type="entry name" value="HERV-K_env"/>
</dbReference>
<dbReference type="InterPro" id="IPR051255">
    <property type="entry name" value="Retroviral_env_glycoprotein"/>
</dbReference>
<dbReference type="PANTHER" id="PTHR34313">
    <property type="entry name" value="ENDOGENOUS RETROVIRUS GROUP K MEMBER 113 ENV POLYPROTEIN-RELATED"/>
    <property type="match status" value="1"/>
</dbReference>
<dbReference type="PANTHER" id="PTHR34313:SF3">
    <property type="entry name" value="ENDOGENOUS RETROVIRUS GROUP K MEMBER 113 ENV POLYPROTEIN-RELATED"/>
    <property type="match status" value="1"/>
</dbReference>
<dbReference type="Pfam" id="PF00517">
    <property type="entry name" value="GP41"/>
    <property type="match status" value="1"/>
</dbReference>
<dbReference type="Pfam" id="PF13804">
    <property type="entry name" value="HERV-K_env_2"/>
    <property type="match status" value="1"/>
</dbReference>
<dbReference type="Pfam" id="PF15695">
    <property type="entry name" value="HERV-K_REC"/>
    <property type="match status" value="1"/>
</dbReference>
<comment type="function">
    <text evidence="4">Retroviral envelope proteins mediate receptor recognition and membrane fusion during early infection. Endogenous envelope proteins may have kept, lost or modified their original function during evolution. This endogenous envelope protein has lost its original fusogenic properties.</text>
</comment>
<comment type="function">
    <text evidence="1">SU mediates receptor recognition.</text>
</comment>
<comment type="function">
    <text evidence="1">TM anchors the envelope heterodimer to the viral membrane through one transmembrane domain. The other hydrophobic domain, called fusion peptide, mediates fusion of the viral membrane with the target cell membrane (By similarity).</text>
</comment>
<comment type="subunit">
    <text evidence="1">The surface (SU) and transmembrane (TM) proteins form a heterodimer. SU and TM are attached by noncovalent interactions or by a labile interchain disulfide bond (By similarity).</text>
</comment>
<comment type="subcellular location">
    <molecule>Transmembrane protein</molecule>
    <subcellularLocation>
        <location evidence="1">Cell membrane</location>
        <topology evidence="1">Single-pass type I membrane protein</topology>
    </subcellularLocation>
</comment>
<comment type="subcellular location">
    <molecule>Surface protein</molecule>
    <subcellularLocation>
        <location evidence="1">Cell membrane</location>
        <topology evidence="1">Peripheral membrane protein</topology>
    </subcellularLocation>
    <text evidence="1">The surface protein is not anchored to the membrane, but localizes to the extracellular surface through its binding to TM.</text>
</comment>
<comment type="subcellular location">
    <molecule>Endogenous retrovirus group K member 21 Env polyprotein</molecule>
    <subcellularLocation>
        <location evidence="1">Virion</location>
    </subcellularLocation>
</comment>
<comment type="PTM">
    <text evidence="1">Specific enzymatic cleavages in vivo yield the mature SU and TM proteins.</text>
</comment>
<comment type="miscellaneous">
    <text>ERVK-21 has a type 2 genome. The HERV-K(HML-2) family contains type 1 and type 2 genomes depending on the absence or presence of 292 nucleotides at the 5'-end of the env gene resulting in Env proteins of distinct sizes. Despite their overall retroviral envelope structure HERV-K(HML-2) type 1 envelope proteins lack a predictable signal sequence. Subgenomic RNA transcripts coding for full-length envelope proteins have been detected for both type of genomes.</text>
</comment>
<comment type="similarity">
    <text evidence="5">Belongs to the beta type-B retroviral envelope protein family. HERV class-II K(HML-2) env subfamily.</text>
</comment>
<gene>
    <name type="primary">ERVK-21</name>
</gene>
<proteinExistence type="evidence at protein level"/>
<sequence>MHPSEMQRKAPPRRRRHRNRAPLTHKMNKMVTSEQMKLPSTKKAEPPTWAQLKKLTQLATKYLENTKVTQTPESMLLAALMIVSMVVSLPMPAGAAAANYTNWAYVPFPPLIRAVTWMDNPIEVYVNDSVWVHGPIDDRCPAKPEEEGMMINISIGYHYPPICLGRAPGCLMPAVQNWLVEVPTVSPISRFTYNMVSGMSLRPRVNYLQDFSYQRSLKFRPKGKPCPKEIPKESKNTEVLVWEECVANSVVILQNNEFGTIIDWAPRGQFYHNCSGQTQSCPSAQVSPAVDSDLTESLDKHKHKKLQSFYPWEWGEKGISTPRPKIISPVSGPEHPELWRLTVASHHIRIWSGNQTLETRDRKPFYTVDLNSSLTVPLQSCVKPPYMLVVGNIVIKPDSQTITCENCRLLTCIDSTFNWQHRILLVRAREGVWIPVSMDRPWEASPSIHILTEVLKGVLNRSKRFIFTLIAVIMGLIAVTAMAAVAGVALHSFVQSVNFVNDWQKNSTRLWNSQSSIDQKLANQINDLRQTVIWMGDRLMSLEHRFQLQCDWNTSDFCITPQIYNESEHHWDMVRRHLQGREDNLTLDISKLKEQIFEASKAHLNLVPGTEAIAGVADGLANLNPVTWVKTIGSTTIINLILILVCLFCLLLVCRCTQQLRRDSDHRERAMMTMVVLSKRKGGNVGKSKRDQIVTVSV</sequence>
<evidence type="ECO:0000250" key="1"/>
<evidence type="ECO:0000255" key="2"/>
<evidence type="ECO:0000256" key="3">
    <source>
        <dbReference type="SAM" id="MobiDB-lite"/>
    </source>
</evidence>
<evidence type="ECO:0000269" key="4">
    <source>
    </source>
</evidence>
<evidence type="ECO:0000305" key="5"/>
<name>ENK21_HUMAN</name>
<organism>
    <name type="scientific">Homo sapiens</name>
    <name type="common">Human</name>
    <dbReference type="NCBI Taxonomy" id="9606"/>
    <lineage>
        <taxon>Eukaryota</taxon>
        <taxon>Metazoa</taxon>
        <taxon>Chordata</taxon>
        <taxon>Craniata</taxon>
        <taxon>Vertebrata</taxon>
        <taxon>Euteleostomi</taxon>
        <taxon>Mammalia</taxon>
        <taxon>Eutheria</taxon>
        <taxon>Euarchontoglires</taxon>
        <taxon>Primates</taxon>
        <taxon>Haplorrhini</taxon>
        <taxon>Catarrhini</taxon>
        <taxon>Hominidae</taxon>
        <taxon>Homo</taxon>
    </lineage>
</organism>